<feature type="chain" id="PRO_0000370058" description="3-deoxy-manno-octulosonate cytidylyltransferase">
    <location>
        <begin position="1"/>
        <end position="265"/>
    </location>
</feature>
<comment type="function">
    <text evidence="1">Activates KDO (a required 8-carbon sugar) for incorporation into bacterial lipopolysaccharide in Gram-negative bacteria.</text>
</comment>
<comment type="catalytic activity">
    <reaction evidence="1">
        <text>3-deoxy-alpha-D-manno-oct-2-ulosonate + CTP = CMP-3-deoxy-beta-D-manno-octulosonate + diphosphate</text>
        <dbReference type="Rhea" id="RHEA:23448"/>
        <dbReference type="ChEBI" id="CHEBI:33019"/>
        <dbReference type="ChEBI" id="CHEBI:37563"/>
        <dbReference type="ChEBI" id="CHEBI:85986"/>
        <dbReference type="ChEBI" id="CHEBI:85987"/>
        <dbReference type="EC" id="2.7.7.38"/>
    </reaction>
</comment>
<comment type="pathway">
    <text evidence="1">Nucleotide-sugar biosynthesis; CMP-3-deoxy-D-manno-octulosonate biosynthesis; CMP-3-deoxy-D-manno-octulosonate from 3-deoxy-D-manno-octulosonate and CTP: step 1/1.</text>
</comment>
<comment type="pathway">
    <text evidence="1">Bacterial outer membrane biogenesis; lipopolysaccharide biosynthesis.</text>
</comment>
<comment type="subcellular location">
    <subcellularLocation>
        <location evidence="1">Cytoplasm</location>
    </subcellularLocation>
</comment>
<comment type="similarity">
    <text evidence="1">Belongs to the KdsB family.</text>
</comment>
<evidence type="ECO:0000255" key="1">
    <source>
        <dbReference type="HAMAP-Rule" id="MF_00057"/>
    </source>
</evidence>
<protein>
    <recommendedName>
        <fullName evidence="1">3-deoxy-manno-octulosonate cytidylyltransferase</fullName>
        <ecNumber evidence="1">2.7.7.38</ecNumber>
    </recommendedName>
    <alternativeName>
        <fullName evidence="1">CMP-2-keto-3-deoxyoctulosonic acid synthase</fullName>
        <shortName evidence="1">CKS</shortName>
        <shortName evidence="1">CMP-KDO synthase</shortName>
    </alternativeName>
</protein>
<sequence length="265" mass="27613">MPTAPFTVLIPARLASSRLPGKPLADIAGLPMVVRVAQRAGLSGATRCVVAADDESIVAACAAHGVAAVLTRSDHASGSDRLAEACELLGLDGDDIVVNVQGDEPLIAPDLIDAVAALLPQQPSASMGTAAHAIDSLADFTNPNVVKVVCDAQGMAHYFSRAPIPFAREHAGQAWWEAASAAASAAPGHPGFAPLRHIGIYSYRAGFLRSFPQLSPAPTEVLEALEQLRALWHGHRIAVHLTPHAPGPGVDTPEDLERVRARLSA</sequence>
<dbReference type="EC" id="2.7.7.38" evidence="1"/>
<dbReference type="EMBL" id="CP000884">
    <property type="protein sequence ID" value="ABX36202.1"/>
    <property type="molecule type" value="Genomic_DNA"/>
</dbReference>
<dbReference type="RefSeq" id="WP_012205402.1">
    <property type="nucleotide sequence ID" value="NC_010002.1"/>
</dbReference>
<dbReference type="SMR" id="A9BWI2"/>
<dbReference type="STRING" id="398578.Daci_3568"/>
<dbReference type="GeneID" id="24115728"/>
<dbReference type="KEGG" id="dac:Daci_3568"/>
<dbReference type="eggNOG" id="COG1212">
    <property type="taxonomic scope" value="Bacteria"/>
</dbReference>
<dbReference type="HOGENOM" id="CLU_065038_1_0_4"/>
<dbReference type="UniPathway" id="UPA00030"/>
<dbReference type="UniPathway" id="UPA00358">
    <property type="reaction ID" value="UER00476"/>
</dbReference>
<dbReference type="Proteomes" id="UP000000784">
    <property type="component" value="Chromosome"/>
</dbReference>
<dbReference type="GO" id="GO:0005829">
    <property type="term" value="C:cytosol"/>
    <property type="evidence" value="ECO:0007669"/>
    <property type="project" value="TreeGrafter"/>
</dbReference>
<dbReference type="GO" id="GO:0008690">
    <property type="term" value="F:3-deoxy-manno-octulosonate cytidylyltransferase activity"/>
    <property type="evidence" value="ECO:0007669"/>
    <property type="project" value="UniProtKB-UniRule"/>
</dbReference>
<dbReference type="GO" id="GO:0033468">
    <property type="term" value="P:CMP-keto-3-deoxy-D-manno-octulosonic acid biosynthetic process"/>
    <property type="evidence" value="ECO:0007669"/>
    <property type="project" value="UniProtKB-UniRule"/>
</dbReference>
<dbReference type="GO" id="GO:0009103">
    <property type="term" value="P:lipopolysaccharide biosynthetic process"/>
    <property type="evidence" value="ECO:0007669"/>
    <property type="project" value="UniProtKB-UniRule"/>
</dbReference>
<dbReference type="CDD" id="cd02517">
    <property type="entry name" value="CMP-KDO-Synthetase"/>
    <property type="match status" value="1"/>
</dbReference>
<dbReference type="FunFam" id="3.90.550.10:FF:000011">
    <property type="entry name" value="3-deoxy-manno-octulosonate cytidylyltransferase"/>
    <property type="match status" value="1"/>
</dbReference>
<dbReference type="Gene3D" id="3.90.550.10">
    <property type="entry name" value="Spore Coat Polysaccharide Biosynthesis Protein SpsA, Chain A"/>
    <property type="match status" value="1"/>
</dbReference>
<dbReference type="HAMAP" id="MF_00057">
    <property type="entry name" value="KdsB"/>
    <property type="match status" value="1"/>
</dbReference>
<dbReference type="InterPro" id="IPR003329">
    <property type="entry name" value="Cytidylyl_trans"/>
</dbReference>
<dbReference type="InterPro" id="IPR004528">
    <property type="entry name" value="KdsB"/>
</dbReference>
<dbReference type="InterPro" id="IPR029044">
    <property type="entry name" value="Nucleotide-diphossugar_trans"/>
</dbReference>
<dbReference type="NCBIfam" id="TIGR00466">
    <property type="entry name" value="kdsB"/>
    <property type="match status" value="1"/>
</dbReference>
<dbReference type="NCBIfam" id="NF003952">
    <property type="entry name" value="PRK05450.1-5"/>
    <property type="match status" value="1"/>
</dbReference>
<dbReference type="NCBIfam" id="NF009905">
    <property type="entry name" value="PRK13368.1"/>
    <property type="match status" value="1"/>
</dbReference>
<dbReference type="PANTHER" id="PTHR42866">
    <property type="entry name" value="3-DEOXY-MANNO-OCTULOSONATE CYTIDYLYLTRANSFERASE"/>
    <property type="match status" value="1"/>
</dbReference>
<dbReference type="PANTHER" id="PTHR42866:SF2">
    <property type="entry name" value="3-DEOXY-MANNO-OCTULOSONATE CYTIDYLYLTRANSFERASE, MITOCHONDRIAL"/>
    <property type="match status" value="1"/>
</dbReference>
<dbReference type="Pfam" id="PF02348">
    <property type="entry name" value="CTP_transf_3"/>
    <property type="match status" value="1"/>
</dbReference>
<dbReference type="SUPFAM" id="SSF53448">
    <property type="entry name" value="Nucleotide-diphospho-sugar transferases"/>
    <property type="match status" value="1"/>
</dbReference>
<proteinExistence type="inferred from homology"/>
<gene>
    <name evidence="1" type="primary">kdsB</name>
    <name type="ordered locus">Daci_3568</name>
</gene>
<keyword id="KW-0963">Cytoplasm</keyword>
<keyword id="KW-0448">Lipopolysaccharide biosynthesis</keyword>
<keyword id="KW-0548">Nucleotidyltransferase</keyword>
<keyword id="KW-1185">Reference proteome</keyword>
<keyword id="KW-0808">Transferase</keyword>
<organism>
    <name type="scientific">Delftia acidovorans (strain DSM 14801 / SPH-1)</name>
    <dbReference type="NCBI Taxonomy" id="398578"/>
    <lineage>
        <taxon>Bacteria</taxon>
        <taxon>Pseudomonadati</taxon>
        <taxon>Pseudomonadota</taxon>
        <taxon>Betaproteobacteria</taxon>
        <taxon>Burkholderiales</taxon>
        <taxon>Comamonadaceae</taxon>
        <taxon>Delftia</taxon>
    </lineage>
</organism>
<reference key="1">
    <citation type="submission" date="2007-11" db="EMBL/GenBank/DDBJ databases">
        <title>Complete sequence of Delftia acidovorans DSM 14801 / SPH-1.</title>
        <authorList>
            <person name="Copeland A."/>
            <person name="Lucas S."/>
            <person name="Lapidus A."/>
            <person name="Barry K."/>
            <person name="Glavina del Rio T."/>
            <person name="Dalin E."/>
            <person name="Tice H."/>
            <person name="Pitluck S."/>
            <person name="Lowry S."/>
            <person name="Clum A."/>
            <person name="Schmutz J."/>
            <person name="Larimer F."/>
            <person name="Land M."/>
            <person name="Hauser L."/>
            <person name="Kyrpides N."/>
            <person name="Kim E."/>
            <person name="Schleheck D."/>
            <person name="Richardson P."/>
        </authorList>
    </citation>
    <scope>NUCLEOTIDE SEQUENCE [LARGE SCALE GENOMIC DNA]</scope>
    <source>
        <strain>DSM 14801 / SPH-1</strain>
    </source>
</reference>
<name>KDSB_DELAS</name>
<accession>A9BWI2</accession>